<sequence>MANVLDELLDRGYIKQFTHEEETRKLLENEKVTFYIGFDPTADSLHVGHFIAMMFMAHMQRAGHRPIALLGGGTAMVGDPSGKTDMRKMLTKEQIQHNVDSIKKQMERFIDFSDDKALIVNNADWLLDLNYVDFLREVGVHFSVNRMLSAECFKQRLEKGLSFLEFNYMLMQGYDFYVLNQKYGCKMELGGDDQWSNMIAGVELVRRKAQGDAMAMTCTLLTNSQGQKMGKTVGGALWLDADKVSPFDFYQYWRNVDDADVEKCLALLTFLPMDEVRRLGALEGAEINGAKKILAYEVTKLVHGDEEAKKAEEAANALFSGGADMSNVPTVIISKEDLGSTVLDVIAKVKIVPSKKEGRRLIEQGGLSINGEKITELTRTLNDDDFKDGSALIKRGKKNYNKIEIQ</sequence>
<evidence type="ECO:0000255" key="1">
    <source>
        <dbReference type="HAMAP-Rule" id="MF_02006"/>
    </source>
</evidence>
<dbReference type="EC" id="6.1.1.1" evidence="1"/>
<dbReference type="EMBL" id="CP001056">
    <property type="protein sequence ID" value="ACD23219.1"/>
    <property type="molecule type" value="Genomic_DNA"/>
</dbReference>
<dbReference type="SMR" id="B2TQ95"/>
<dbReference type="KEGG" id="cbk:CLL_A3166"/>
<dbReference type="PATRIC" id="fig|935198.13.peg.3131"/>
<dbReference type="HOGENOM" id="CLU_024003_0_3_9"/>
<dbReference type="Proteomes" id="UP000001195">
    <property type="component" value="Chromosome"/>
</dbReference>
<dbReference type="GO" id="GO:0005829">
    <property type="term" value="C:cytosol"/>
    <property type="evidence" value="ECO:0007669"/>
    <property type="project" value="TreeGrafter"/>
</dbReference>
<dbReference type="GO" id="GO:0005524">
    <property type="term" value="F:ATP binding"/>
    <property type="evidence" value="ECO:0007669"/>
    <property type="project" value="UniProtKB-UniRule"/>
</dbReference>
<dbReference type="GO" id="GO:0003723">
    <property type="term" value="F:RNA binding"/>
    <property type="evidence" value="ECO:0007669"/>
    <property type="project" value="UniProtKB-KW"/>
</dbReference>
<dbReference type="GO" id="GO:0004831">
    <property type="term" value="F:tyrosine-tRNA ligase activity"/>
    <property type="evidence" value="ECO:0007669"/>
    <property type="project" value="UniProtKB-UniRule"/>
</dbReference>
<dbReference type="GO" id="GO:0006437">
    <property type="term" value="P:tyrosyl-tRNA aminoacylation"/>
    <property type="evidence" value="ECO:0007669"/>
    <property type="project" value="UniProtKB-UniRule"/>
</dbReference>
<dbReference type="CDD" id="cd00165">
    <property type="entry name" value="S4"/>
    <property type="match status" value="1"/>
</dbReference>
<dbReference type="CDD" id="cd00805">
    <property type="entry name" value="TyrRS_core"/>
    <property type="match status" value="1"/>
</dbReference>
<dbReference type="FunFam" id="1.10.240.10:FF:000001">
    <property type="entry name" value="Tyrosine--tRNA ligase"/>
    <property type="match status" value="1"/>
</dbReference>
<dbReference type="FunFam" id="3.40.50.620:FF:000008">
    <property type="entry name" value="Tyrosine--tRNA ligase"/>
    <property type="match status" value="1"/>
</dbReference>
<dbReference type="Gene3D" id="3.40.50.620">
    <property type="entry name" value="HUPs"/>
    <property type="match status" value="1"/>
</dbReference>
<dbReference type="Gene3D" id="3.10.290.10">
    <property type="entry name" value="RNA-binding S4 domain"/>
    <property type="match status" value="1"/>
</dbReference>
<dbReference type="Gene3D" id="1.10.240.10">
    <property type="entry name" value="Tyrosyl-Transfer RNA Synthetase"/>
    <property type="match status" value="1"/>
</dbReference>
<dbReference type="HAMAP" id="MF_02006">
    <property type="entry name" value="Tyr_tRNA_synth_type1"/>
    <property type="match status" value="1"/>
</dbReference>
<dbReference type="InterPro" id="IPR001412">
    <property type="entry name" value="aa-tRNA-synth_I_CS"/>
</dbReference>
<dbReference type="InterPro" id="IPR002305">
    <property type="entry name" value="aa-tRNA-synth_Ic"/>
</dbReference>
<dbReference type="InterPro" id="IPR014729">
    <property type="entry name" value="Rossmann-like_a/b/a_fold"/>
</dbReference>
<dbReference type="InterPro" id="IPR036986">
    <property type="entry name" value="S4_RNA-bd_sf"/>
</dbReference>
<dbReference type="InterPro" id="IPR054608">
    <property type="entry name" value="SYY-like_C"/>
</dbReference>
<dbReference type="InterPro" id="IPR002307">
    <property type="entry name" value="Tyr-tRNA-ligase"/>
</dbReference>
<dbReference type="InterPro" id="IPR024088">
    <property type="entry name" value="Tyr-tRNA-ligase_bac-type"/>
</dbReference>
<dbReference type="InterPro" id="IPR024107">
    <property type="entry name" value="Tyr-tRNA-ligase_bac_1"/>
</dbReference>
<dbReference type="NCBIfam" id="TIGR00234">
    <property type="entry name" value="tyrS"/>
    <property type="match status" value="1"/>
</dbReference>
<dbReference type="PANTHER" id="PTHR11766:SF0">
    <property type="entry name" value="TYROSINE--TRNA LIGASE, MITOCHONDRIAL"/>
    <property type="match status" value="1"/>
</dbReference>
<dbReference type="PANTHER" id="PTHR11766">
    <property type="entry name" value="TYROSYL-TRNA SYNTHETASE"/>
    <property type="match status" value="1"/>
</dbReference>
<dbReference type="Pfam" id="PF22421">
    <property type="entry name" value="SYY_C-terminal"/>
    <property type="match status" value="1"/>
</dbReference>
<dbReference type="Pfam" id="PF00579">
    <property type="entry name" value="tRNA-synt_1b"/>
    <property type="match status" value="1"/>
</dbReference>
<dbReference type="PRINTS" id="PR01040">
    <property type="entry name" value="TRNASYNTHTYR"/>
</dbReference>
<dbReference type="SUPFAM" id="SSF55174">
    <property type="entry name" value="Alpha-L RNA-binding motif"/>
    <property type="match status" value="1"/>
</dbReference>
<dbReference type="SUPFAM" id="SSF52374">
    <property type="entry name" value="Nucleotidylyl transferase"/>
    <property type="match status" value="1"/>
</dbReference>
<dbReference type="PROSITE" id="PS00178">
    <property type="entry name" value="AA_TRNA_LIGASE_I"/>
    <property type="match status" value="1"/>
</dbReference>
<dbReference type="PROSITE" id="PS50889">
    <property type="entry name" value="S4"/>
    <property type="match status" value="1"/>
</dbReference>
<reference key="1">
    <citation type="submission" date="2008-04" db="EMBL/GenBank/DDBJ databases">
        <title>Complete sequence of Clostridium botulinum strain Eklund.</title>
        <authorList>
            <person name="Brinkac L.M."/>
            <person name="Brown J.L."/>
            <person name="Bruce D."/>
            <person name="Detter C."/>
            <person name="Munk C."/>
            <person name="Smith L.A."/>
            <person name="Smith T.J."/>
            <person name="Sutton G."/>
            <person name="Brettin T.S."/>
        </authorList>
    </citation>
    <scope>NUCLEOTIDE SEQUENCE [LARGE SCALE GENOMIC DNA]</scope>
    <source>
        <strain>Eklund 17B / Type B</strain>
    </source>
</reference>
<comment type="function">
    <text evidence="1">Catalyzes the attachment of tyrosine to tRNA(Tyr) in a two-step reaction: tyrosine is first activated by ATP to form Tyr-AMP and then transferred to the acceptor end of tRNA(Tyr).</text>
</comment>
<comment type="catalytic activity">
    <reaction evidence="1">
        <text>tRNA(Tyr) + L-tyrosine + ATP = L-tyrosyl-tRNA(Tyr) + AMP + diphosphate + H(+)</text>
        <dbReference type="Rhea" id="RHEA:10220"/>
        <dbReference type="Rhea" id="RHEA-COMP:9706"/>
        <dbReference type="Rhea" id="RHEA-COMP:9707"/>
        <dbReference type="ChEBI" id="CHEBI:15378"/>
        <dbReference type="ChEBI" id="CHEBI:30616"/>
        <dbReference type="ChEBI" id="CHEBI:33019"/>
        <dbReference type="ChEBI" id="CHEBI:58315"/>
        <dbReference type="ChEBI" id="CHEBI:78442"/>
        <dbReference type="ChEBI" id="CHEBI:78536"/>
        <dbReference type="ChEBI" id="CHEBI:456215"/>
        <dbReference type="EC" id="6.1.1.1"/>
    </reaction>
</comment>
<comment type="subunit">
    <text evidence="1">Homodimer.</text>
</comment>
<comment type="subcellular location">
    <subcellularLocation>
        <location evidence="1">Cytoplasm</location>
    </subcellularLocation>
</comment>
<comment type="similarity">
    <text evidence="1">Belongs to the class-I aminoacyl-tRNA synthetase family. TyrS type 1 subfamily.</text>
</comment>
<protein>
    <recommendedName>
        <fullName evidence="1">Tyrosine--tRNA ligase</fullName>
        <ecNumber evidence="1">6.1.1.1</ecNumber>
    </recommendedName>
    <alternativeName>
        <fullName evidence="1">Tyrosyl-tRNA synthetase</fullName>
        <shortName evidence="1">TyrRS</shortName>
    </alternativeName>
</protein>
<keyword id="KW-0030">Aminoacyl-tRNA synthetase</keyword>
<keyword id="KW-0067">ATP-binding</keyword>
<keyword id="KW-0963">Cytoplasm</keyword>
<keyword id="KW-0436">Ligase</keyword>
<keyword id="KW-0547">Nucleotide-binding</keyword>
<keyword id="KW-0648">Protein biosynthesis</keyword>
<keyword id="KW-0694">RNA-binding</keyword>
<organism>
    <name type="scientific">Clostridium botulinum (strain Eklund 17B / Type B)</name>
    <dbReference type="NCBI Taxonomy" id="935198"/>
    <lineage>
        <taxon>Bacteria</taxon>
        <taxon>Bacillati</taxon>
        <taxon>Bacillota</taxon>
        <taxon>Clostridia</taxon>
        <taxon>Eubacteriales</taxon>
        <taxon>Clostridiaceae</taxon>
        <taxon>Clostridium</taxon>
    </lineage>
</organism>
<feature type="chain" id="PRO_1000189274" description="Tyrosine--tRNA ligase">
    <location>
        <begin position="1"/>
        <end position="406"/>
    </location>
</feature>
<feature type="domain" description="S4 RNA-binding" evidence="1">
    <location>
        <begin position="340"/>
        <end position="405"/>
    </location>
</feature>
<feature type="short sequence motif" description="'HIGH' region">
    <location>
        <begin position="40"/>
        <end position="49"/>
    </location>
</feature>
<feature type="short sequence motif" description="'KMSKS' region">
    <location>
        <begin position="228"/>
        <end position="232"/>
    </location>
</feature>
<feature type="binding site" evidence="1">
    <location>
        <position position="35"/>
    </location>
    <ligand>
        <name>L-tyrosine</name>
        <dbReference type="ChEBI" id="CHEBI:58315"/>
    </ligand>
</feature>
<feature type="binding site" evidence="1">
    <location>
        <position position="168"/>
    </location>
    <ligand>
        <name>L-tyrosine</name>
        <dbReference type="ChEBI" id="CHEBI:58315"/>
    </ligand>
</feature>
<feature type="binding site" evidence="1">
    <location>
        <position position="172"/>
    </location>
    <ligand>
        <name>L-tyrosine</name>
        <dbReference type="ChEBI" id="CHEBI:58315"/>
    </ligand>
</feature>
<feature type="binding site" evidence="1">
    <location>
        <position position="231"/>
    </location>
    <ligand>
        <name>ATP</name>
        <dbReference type="ChEBI" id="CHEBI:30616"/>
    </ligand>
</feature>
<proteinExistence type="inferred from homology"/>
<gene>
    <name evidence="1" type="primary">tyrS</name>
    <name type="ordered locus">CLL_A3166</name>
</gene>
<name>SYY_CLOBB</name>
<accession>B2TQ95</accession>